<name>DTDA_KORCO</name>
<protein>
    <recommendedName>
        <fullName evidence="1">D-aminoacyl-tRNA deacylase</fullName>
        <ecNumber evidence="1">3.1.1.96</ecNumber>
    </recommendedName>
    <alternativeName>
        <fullName>D-tyrosyl-tRNA(Tyr) deacylase</fullName>
    </alternativeName>
</protein>
<comment type="function">
    <text evidence="1">D-aminoacyl-tRNA deacylase with broad substrate specificity. By recycling D-aminoacyl-tRNA to D-amino acids and free tRNA molecules, this enzyme counteracts the toxicity associated with the formation of D-aminoacyl-tRNA entities in vivo.</text>
</comment>
<comment type="catalytic activity">
    <reaction evidence="1">
        <text>a D-aminoacyl-tRNA + H2O = a tRNA + a D-alpha-amino acid + H(+)</text>
        <dbReference type="Rhea" id="RHEA:13953"/>
        <dbReference type="Rhea" id="RHEA-COMP:10123"/>
        <dbReference type="Rhea" id="RHEA-COMP:10124"/>
        <dbReference type="ChEBI" id="CHEBI:15377"/>
        <dbReference type="ChEBI" id="CHEBI:15378"/>
        <dbReference type="ChEBI" id="CHEBI:59871"/>
        <dbReference type="ChEBI" id="CHEBI:78442"/>
        <dbReference type="ChEBI" id="CHEBI:79333"/>
        <dbReference type="EC" id="3.1.1.96"/>
    </reaction>
</comment>
<comment type="catalytic activity">
    <reaction evidence="1">
        <text>glycyl-tRNA(Ala) + H2O = tRNA(Ala) + glycine + H(+)</text>
        <dbReference type="Rhea" id="RHEA:53744"/>
        <dbReference type="Rhea" id="RHEA-COMP:9657"/>
        <dbReference type="Rhea" id="RHEA-COMP:13640"/>
        <dbReference type="ChEBI" id="CHEBI:15377"/>
        <dbReference type="ChEBI" id="CHEBI:15378"/>
        <dbReference type="ChEBI" id="CHEBI:57305"/>
        <dbReference type="ChEBI" id="CHEBI:78442"/>
        <dbReference type="ChEBI" id="CHEBI:78522"/>
        <dbReference type="EC" id="3.1.1.96"/>
    </reaction>
</comment>
<comment type="cofactor">
    <cofactor evidence="1">
        <name>Zn(2+)</name>
        <dbReference type="ChEBI" id="CHEBI:29105"/>
    </cofactor>
    <text evidence="1">Binds 2 Zn(2+) ions per subunit.</text>
</comment>
<comment type="subunit">
    <text evidence="1">Monomer.</text>
</comment>
<comment type="similarity">
    <text evidence="1">Belongs to the DtdA deacylase family.</text>
</comment>
<organism>
    <name type="scientific">Korarchaeum cryptofilum (strain OPF8)</name>
    <dbReference type="NCBI Taxonomy" id="374847"/>
    <lineage>
        <taxon>Archaea</taxon>
        <taxon>Thermoproteota</taxon>
        <taxon>Candidatus Korarchaeia</taxon>
        <taxon>Candidatus Korarchaeales</taxon>
        <taxon>Candidatus Korarchaeaceae</taxon>
        <taxon>Candidatus Korarchaeum</taxon>
    </lineage>
</organism>
<gene>
    <name evidence="1" type="primary">dtdA</name>
    <name type="ordered locus">Kcr_0050</name>
</gene>
<sequence length="276" mass="30777">MSKRLALAYSKKDPAGSGMAREIKDMMGEEFEISDKRCELIEVDREILYINGSQFEGFDYLAVLSRHSGTPNHPIFTAHVSGNFGRARYGGDHFKLSIAIPSLMKEYLISVSKRAEEIGYWVGFEPTHHGPTLDIPTAFLEIGCDETAWRDERGLRAAAESVLEAIESWKDGKFVAAVAFGGPHINDHFTRVELFTRFAIGHAARKLDAEWVDGEMVKQAVSRNGEPTGVAIVDNKGLKGEDRERIEGALRDLGLEVIRVKKILRDELGEEEGEEI</sequence>
<evidence type="ECO:0000255" key="1">
    <source>
        <dbReference type="HAMAP-Rule" id="MF_00562"/>
    </source>
</evidence>
<proteinExistence type="inferred from homology"/>
<accession>B1L7I3</accession>
<reference key="1">
    <citation type="journal article" date="2008" name="Proc. Natl. Acad. Sci. U.S.A.">
        <title>A korarchaeal genome reveals new insights into the evolution of the Archaea.</title>
        <authorList>
            <person name="Elkins J.G."/>
            <person name="Podar M."/>
            <person name="Graham D.E."/>
            <person name="Makarova K.S."/>
            <person name="Wolf Y."/>
            <person name="Randau L."/>
            <person name="Hedlund B.P."/>
            <person name="Brochier-Armanet C."/>
            <person name="Kunin V."/>
            <person name="Anderson I."/>
            <person name="Lapidus A."/>
            <person name="Goltsman E."/>
            <person name="Barry K."/>
            <person name="Koonin E.V."/>
            <person name="Hugenholtz P."/>
            <person name="Kyrpides N."/>
            <person name="Wanner G."/>
            <person name="Richardson P."/>
            <person name="Keller M."/>
            <person name="Stetter K.O."/>
        </authorList>
    </citation>
    <scope>NUCLEOTIDE SEQUENCE [LARGE SCALE GENOMIC DNA]</scope>
    <source>
        <strain>OPF8</strain>
    </source>
</reference>
<dbReference type="EC" id="3.1.1.96" evidence="1"/>
<dbReference type="EMBL" id="CP000968">
    <property type="protein sequence ID" value="ACB06810.1"/>
    <property type="molecule type" value="Genomic_DNA"/>
</dbReference>
<dbReference type="RefSeq" id="WP_012308707.1">
    <property type="nucleotide sequence ID" value="NC_010482.1"/>
</dbReference>
<dbReference type="SMR" id="B1L7I3"/>
<dbReference type="FunCoup" id="B1L7I3">
    <property type="interactions" value="2"/>
</dbReference>
<dbReference type="STRING" id="374847.Kcr_0050"/>
<dbReference type="EnsemblBacteria" id="ACB06810">
    <property type="protein sequence ID" value="ACB06810"/>
    <property type="gene ID" value="Kcr_0050"/>
</dbReference>
<dbReference type="GeneID" id="6093339"/>
<dbReference type="KEGG" id="kcr:Kcr_0050"/>
<dbReference type="eggNOG" id="arCOG01616">
    <property type="taxonomic scope" value="Archaea"/>
</dbReference>
<dbReference type="HOGENOM" id="CLU_056464_1_0_2"/>
<dbReference type="InParanoid" id="B1L7I3"/>
<dbReference type="OrthoDB" id="9863at2157"/>
<dbReference type="PhylomeDB" id="B1L7I3"/>
<dbReference type="Proteomes" id="UP000001686">
    <property type="component" value="Chromosome"/>
</dbReference>
<dbReference type="GO" id="GO:0051499">
    <property type="term" value="F:D-aminoacyl-tRNA deacylase activity"/>
    <property type="evidence" value="ECO:0000318"/>
    <property type="project" value="GO_Central"/>
</dbReference>
<dbReference type="GO" id="GO:0008270">
    <property type="term" value="F:zinc ion binding"/>
    <property type="evidence" value="ECO:0007669"/>
    <property type="project" value="UniProtKB-UniRule"/>
</dbReference>
<dbReference type="GO" id="GO:0019478">
    <property type="term" value="P:D-amino acid catabolic process"/>
    <property type="evidence" value="ECO:0007669"/>
    <property type="project" value="UniProtKB-UniRule"/>
</dbReference>
<dbReference type="FunFam" id="3.40.630.50:FF:000002">
    <property type="entry name" value="D-aminoacyl-tRNA deacylase"/>
    <property type="match status" value="1"/>
</dbReference>
<dbReference type="Gene3D" id="3.40.50.10700">
    <property type="entry name" value="AF0625-like"/>
    <property type="match status" value="1"/>
</dbReference>
<dbReference type="Gene3D" id="3.40.630.50">
    <property type="entry name" value="AF0625-like"/>
    <property type="match status" value="1"/>
</dbReference>
<dbReference type="HAMAP" id="MF_00562">
    <property type="entry name" value="Deacylase_DtdA"/>
    <property type="match status" value="1"/>
</dbReference>
<dbReference type="InterPro" id="IPR018033">
    <property type="entry name" value="Deacylase_DtdA_archaea"/>
</dbReference>
<dbReference type="InterPro" id="IPR007508">
    <property type="entry name" value="DtdA"/>
</dbReference>
<dbReference type="PANTHER" id="PTHR34667">
    <property type="entry name" value="D-AMINOACYL-TRNA DEACYLASE"/>
    <property type="match status" value="1"/>
</dbReference>
<dbReference type="PANTHER" id="PTHR34667:SF1">
    <property type="entry name" value="D-AMINOACYL-TRNA DEACYLASE"/>
    <property type="match status" value="1"/>
</dbReference>
<dbReference type="Pfam" id="PF04414">
    <property type="entry name" value="tRNA_deacylase"/>
    <property type="match status" value="1"/>
</dbReference>
<dbReference type="PIRSF" id="PIRSF016210">
    <property type="entry name" value="UCP016210"/>
    <property type="match status" value="1"/>
</dbReference>
<dbReference type="SUPFAM" id="SSF142535">
    <property type="entry name" value="AF0625-like"/>
    <property type="match status" value="1"/>
</dbReference>
<keyword id="KW-0378">Hydrolase</keyword>
<keyword id="KW-0479">Metal-binding</keyword>
<keyword id="KW-1185">Reference proteome</keyword>
<keyword id="KW-0862">Zinc</keyword>
<feature type="chain" id="PRO_0000345213" description="D-aminoacyl-tRNA deacylase">
    <location>
        <begin position="1"/>
        <end position="276"/>
    </location>
</feature>